<accession>P12151</accession>
<gene>
    <name evidence="1" type="primary">rps16</name>
</gene>
<organism>
    <name type="scientific">Oryza sativa subsp. japonica</name>
    <name type="common">Rice</name>
    <dbReference type="NCBI Taxonomy" id="39947"/>
    <lineage>
        <taxon>Eukaryota</taxon>
        <taxon>Viridiplantae</taxon>
        <taxon>Streptophyta</taxon>
        <taxon>Embryophyta</taxon>
        <taxon>Tracheophyta</taxon>
        <taxon>Spermatophyta</taxon>
        <taxon>Magnoliopsida</taxon>
        <taxon>Liliopsida</taxon>
        <taxon>Poales</taxon>
        <taxon>Poaceae</taxon>
        <taxon>BOP clade</taxon>
        <taxon>Oryzoideae</taxon>
        <taxon>Oryzeae</taxon>
        <taxon>Oryzinae</taxon>
        <taxon>Oryza</taxon>
        <taxon>Oryza sativa</taxon>
    </lineage>
</organism>
<dbReference type="EMBL" id="X15901">
    <property type="protein sequence ID" value="CAA34009.1"/>
    <property type="status" value="ALT_SEQ"/>
    <property type="molecule type" value="Genomic_DNA"/>
</dbReference>
<dbReference type="EMBL" id="AY522330">
    <property type="status" value="NOT_ANNOTATED_CDS"/>
    <property type="molecule type" value="Genomic_DNA"/>
</dbReference>
<dbReference type="PIR" id="JQ0264">
    <property type="entry name" value="R5RZ16"/>
</dbReference>
<dbReference type="RefSeq" id="NP_039362.1">
    <property type="nucleotide sequence ID" value="NC_001320.1"/>
</dbReference>
<dbReference type="SMR" id="P12151"/>
<dbReference type="BioGRID" id="792807">
    <property type="interactions" value="1"/>
</dbReference>
<dbReference type="FunCoup" id="P12151">
    <property type="interactions" value="39"/>
</dbReference>
<dbReference type="STRING" id="39947.P12151"/>
<dbReference type="PaxDb" id="39947-P12151"/>
<dbReference type="GeneID" id="3131439"/>
<dbReference type="KEGG" id="dosa:rps16"/>
<dbReference type="KEGG" id="osa:3131439"/>
<dbReference type="InParanoid" id="P12151"/>
<dbReference type="OrthoDB" id="407221at2759"/>
<dbReference type="Proteomes" id="UP000059680">
    <property type="component" value="Chloroplast"/>
</dbReference>
<dbReference type="GO" id="GO:0009507">
    <property type="term" value="C:chloroplast"/>
    <property type="evidence" value="ECO:0007669"/>
    <property type="project" value="UniProtKB-SubCell"/>
</dbReference>
<dbReference type="GO" id="GO:0009536">
    <property type="term" value="C:plastid"/>
    <property type="evidence" value="ECO:0000250"/>
    <property type="project" value="Gramene"/>
</dbReference>
<dbReference type="GO" id="GO:0015935">
    <property type="term" value="C:small ribosomal subunit"/>
    <property type="evidence" value="ECO:0000318"/>
    <property type="project" value="GO_Central"/>
</dbReference>
<dbReference type="GO" id="GO:0003735">
    <property type="term" value="F:structural constituent of ribosome"/>
    <property type="evidence" value="ECO:0000318"/>
    <property type="project" value="GO_Central"/>
</dbReference>
<dbReference type="GO" id="GO:0006412">
    <property type="term" value="P:translation"/>
    <property type="evidence" value="ECO:0007669"/>
    <property type="project" value="UniProtKB-UniRule"/>
</dbReference>
<dbReference type="FunFam" id="3.30.1320.10:FF:000003">
    <property type="entry name" value="30S ribosomal protein S16, chloroplastic"/>
    <property type="match status" value="1"/>
</dbReference>
<dbReference type="Gene3D" id="3.30.1320.10">
    <property type="match status" value="1"/>
</dbReference>
<dbReference type="HAMAP" id="MF_00385">
    <property type="entry name" value="Ribosomal_bS16"/>
    <property type="match status" value="1"/>
</dbReference>
<dbReference type="InterPro" id="IPR000307">
    <property type="entry name" value="Ribosomal_bS16"/>
</dbReference>
<dbReference type="InterPro" id="IPR020592">
    <property type="entry name" value="Ribosomal_bS16_CS"/>
</dbReference>
<dbReference type="InterPro" id="IPR023803">
    <property type="entry name" value="Ribosomal_bS16_dom_sf"/>
</dbReference>
<dbReference type="NCBIfam" id="TIGR00002">
    <property type="entry name" value="S16"/>
    <property type="match status" value="1"/>
</dbReference>
<dbReference type="PANTHER" id="PTHR12919">
    <property type="entry name" value="30S RIBOSOMAL PROTEIN S16"/>
    <property type="match status" value="1"/>
</dbReference>
<dbReference type="PANTHER" id="PTHR12919:SF20">
    <property type="entry name" value="SMALL RIBOSOMAL SUBUNIT PROTEIN BS16M"/>
    <property type="match status" value="1"/>
</dbReference>
<dbReference type="Pfam" id="PF00886">
    <property type="entry name" value="Ribosomal_S16"/>
    <property type="match status" value="1"/>
</dbReference>
<dbReference type="SUPFAM" id="SSF54565">
    <property type="entry name" value="Ribosomal protein S16"/>
    <property type="match status" value="1"/>
</dbReference>
<dbReference type="PROSITE" id="PS00732">
    <property type="entry name" value="RIBOSOMAL_S16"/>
    <property type="match status" value="1"/>
</dbReference>
<feature type="chain" id="PRO_0000167312" description="Small ribosomal subunit protein bS16c">
    <location>
        <begin position="1"/>
        <end position="85"/>
    </location>
</feature>
<comment type="subcellular location">
    <subcellularLocation>
        <location>Plastid</location>
        <location>Chloroplast</location>
    </subcellularLocation>
</comment>
<comment type="induction">
    <text evidence="2">Transcribed and spliced in green leaves.</text>
</comment>
<comment type="similarity">
    <text evidence="1">Belongs to the bacterial ribosomal protein bS16 family.</text>
</comment>
<comment type="sequence caution" evidence="3">
    <conflict type="erroneous gene model prediction">
        <sequence resource="EMBL-CDS" id="CAA34009"/>
    </conflict>
</comment>
<geneLocation type="chloroplast"/>
<keyword id="KW-0150">Chloroplast</keyword>
<keyword id="KW-0934">Plastid</keyword>
<keyword id="KW-1185">Reference proteome</keyword>
<keyword id="KW-0687">Ribonucleoprotein</keyword>
<keyword id="KW-0689">Ribosomal protein</keyword>
<sequence length="85" mass="10056">MLKLRLKRCGRKQRAVYRIVAIDVRSRREGRDLRKVGFYDPIKNQTCLNVPAILYFLEKGAQPTRTVSDILRKAEFFKEKERTLS</sequence>
<evidence type="ECO:0000255" key="1">
    <source>
        <dbReference type="HAMAP-Rule" id="MF_00385"/>
    </source>
</evidence>
<evidence type="ECO:0000269" key="2">
    <source>
    </source>
</evidence>
<evidence type="ECO:0000305" key="3"/>
<name>RR16_ORYSJ</name>
<proteinExistence type="evidence at transcript level"/>
<reference key="1">
    <citation type="journal article" date="1989" name="Mol. Gen. Genet.">
        <title>The complete sequence of the rice (Oryza sativa) chloroplast genome: intermolecular recombination between distinct tRNA genes accounts for a major plastid DNA inversion during the evolution of the cereals.</title>
        <authorList>
            <person name="Hiratsuka J."/>
            <person name="Shimada H."/>
            <person name="Whittier R."/>
            <person name="Ishibashi T."/>
            <person name="Sakamoto M."/>
            <person name="Mori M."/>
            <person name="Kondo C."/>
            <person name="Honji Y."/>
            <person name="Sun C.-R."/>
            <person name="Meng B.-Y."/>
            <person name="Li Y.-Q."/>
            <person name="Kanno A."/>
            <person name="Nishizawa Y."/>
            <person name="Hirai A."/>
            <person name="Shinozaki K."/>
            <person name="Sugiura M."/>
        </authorList>
    </citation>
    <scope>NUCLEOTIDE SEQUENCE [LARGE SCALE GENOMIC DNA]</scope>
    <source>
        <strain>cv. Nipponbare</strain>
    </source>
</reference>
<reference key="2">
    <citation type="journal article" date="2004" name="Plant Physiol.">
        <title>A comparison of rice chloroplast genomes.</title>
        <authorList>
            <person name="Tang J."/>
            <person name="Xia H."/>
            <person name="Cao M."/>
            <person name="Zhang X."/>
            <person name="Zeng W."/>
            <person name="Hu S."/>
            <person name="Tong W."/>
            <person name="Wang J."/>
            <person name="Wang J."/>
            <person name="Yu J."/>
            <person name="Yang H."/>
            <person name="Zhu L."/>
        </authorList>
    </citation>
    <scope>NUCLEOTIDE SEQUENCE [LARGE SCALE GENOMIC DNA]</scope>
    <source>
        <strain>cv. Nipponbare</strain>
    </source>
</reference>
<reference key="3">
    <citation type="journal article" date="2008" name="Mol. Biol. Evol.">
        <title>Substitution of the gene for chloroplast RPS16 was assisted by generation of a dual targeting signal.</title>
        <authorList>
            <person name="Ueda M."/>
            <person name="Nishikawa T."/>
            <person name="Fujimoto M."/>
            <person name="Takanashi H."/>
            <person name="Arimura S."/>
            <person name="Tsutsumi N."/>
            <person name="Kadowaki K."/>
        </authorList>
    </citation>
    <scope>INDUCTION</scope>
    <source>
        <strain>cv. Nipponbare</strain>
        <tissue>Leaf</tissue>
    </source>
</reference>
<protein>
    <recommendedName>
        <fullName evidence="1">Small ribosomal subunit protein bS16c</fullName>
    </recommendedName>
    <alternativeName>
        <fullName evidence="3">30S ribosomal protein S16, chloroplastic</fullName>
    </alternativeName>
</protein>